<organism>
    <name type="scientific">Mus musculus</name>
    <name type="common">Mouse</name>
    <dbReference type="NCBI Taxonomy" id="10090"/>
    <lineage>
        <taxon>Eukaryota</taxon>
        <taxon>Metazoa</taxon>
        <taxon>Chordata</taxon>
        <taxon>Craniata</taxon>
        <taxon>Vertebrata</taxon>
        <taxon>Euteleostomi</taxon>
        <taxon>Mammalia</taxon>
        <taxon>Eutheria</taxon>
        <taxon>Euarchontoglires</taxon>
        <taxon>Glires</taxon>
        <taxon>Rodentia</taxon>
        <taxon>Myomorpha</taxon>
        <taxon>Muroidea</taxon>
        <taxon>Muridae</taxon>
        <taxon>Murinae</taxon>
        <taxon>Mus</taxon>
        <taxon>Mus</taxon>
    </lineage>
</organism>
<name>OR1M1_MOUSE</name>
<reference key="1">
    <citation type="journal article" date="2002" name="Hum. Mol. Genet.">
        <title>Different evolutionary processes shaped the mouse and human olfactory receptor gene families.</title>
        <authorList>
            <person name="Young J.M."/>
            <person name="Friedman C."/>
            <person name="Williams E.M."/>
            <person name="Ross J.A."/>
            <person name="Tonnes-Priddy L."/>
            <person name="Trask B.J."/>
        </authorList>
    </citation>
    <scope>NUCLEOTIDE SEQUENCE [GENOMIC DNA]</scope>
</reference>
<reference key="2">
    <citation type="journal article" date="2002" name="Hum. Mol. Genet.">
        <authorList>
            <person name="Young J.M."/>
            <person name="Friedman C."/>
            <person name="Williams E.M."/>
            <person name="Ross J.A."/>
            <person name="Tonnes-Priddy L."/>
            <person name="Trask B.J."/>
        </authorList>
    </citation>
    <scope>ERRATUM OF PUBMED:11875048</scope>
</reference>
<reference key="3">
    <citation type="journal article" date="2002" name="Nat. Neurosci.">
        <title>The olfactory receptor gene superfamily of the mouse.</title>
        <authorList>
            <person name="Zhang X."/>
            <person name="Firestein S."/>
        </authorList>
    </citation>
    <scope>NUCLEOTIDE SEQUENCE [GENOMIC DNA]</scope>
</reference>
<reference key="4">
    <citation type="journal article" date="2003" name="Genome Biol.">
        <title>Odorant receptor expressed sequence tags demonstrate olfactory expression of over 400 genes, extensive alternate splicing and unequal expression levels.</title>
        <authorList>
            <person name="Young J.M."/>
            <person name="Shykind B.M."/>
            <person name="Lane R.P."/>
            <person name="Tonnes-Priddy L."/>
            <person name="Ross J.A."/>
            <person name="Walker M."/>
            <person name="Williams E.M."/>
            <person name="Trask B.J."/>
        </authorList>
    </citation>
    <scope>NUCLEOTIDE SEQUENCE [GENOMIC DNA]</scope>
</reference>
<reference key="5">
    <citation type="submission" date="2005-07" db="EMBL/GenBank/DDBJ databases">
        <authorList>
            <person name="Mural R.J."/>
            <person name="Adams M.D."/>
            <person name="Myers E.W."/>
            <person name="Smith H.O."/>
            <person name="Venter J.C."/>
        </authorList>
    </citation>
    <scope>NUCLEOTIDE SEQUENCE [LARGE SCALE GENOMIC DNA]</scope>
</reference>
<reference key="6">
    <citation type="journal article" date="2004" name="Genome Res.">
        <title>The status, quality, and expansion of the NIH full-length cDNA project: the Mammalian Gene Collection (MGC).</title>
        <authorList>
            <consortium name="The MGC Project Team"/>
        </authorList>
    </citation>
    <scope>NUCLEOTIDE SEQUENCE [LARGE SCALE MRNA]</scope>
    <source>
        <tissue>Brain</tissue>
    </source>
</reference>
<reference key="7">
    <citation type="journal article" date="1997" name="Genomics">
        <title>Specific repertoire of olfactory receptor genes in the male germ cells of several mammalian species.</title>
        <authorList>
            <person name="Vanderhaeghen P."/>
            <person name="Schurmans S."/>
            <person name="Vassart G."/>
            <person name="Parmentier M."/>
        </authorList>
    </citation>
    <scope>NUCLEOTIDE SEQUENCE [MRNA] OF 126-282</scope>
    <scope>TISSUE SPECIFICITY</scope>
    <source>
        <tissue>Testis</tissue>
    </source>
</reference>
<dbReference type="EMBL" id="AY073491">
    <property type="protein sequence ID" value="AAL61154.1"/>
    <property type="molecule type" value="Genomic_DNA"/>
</dbReference>
<dbReference type="EMBL" id="AY318003">
    <property type="protein sequence ID" value="AAP71315.1"/>
    <property type="molecule type" value="Genomic_DNA"/>
</dbReference>
<dbReference type="EMBL" id="CH466522">
    <property type="protein sequence ID" value="EDL25055.1"/>
    <property type="molecule type" value="Genomic_DNA"/>
</dbReference>
<dbReference type="EMBL" id="BC125621">
    <property type="protein sequence ID" value="AAI25622.1"/>
    <property type="molecule type" value="mRNA"/>
</dbReference>
<dbReference type="EMBL" id="BC137822">
    <property type="protein sequence ID" value="AAI37823.1"/>
    <property type="molecule type" value="mRNA"/>
</dbReference>
<dbReference type="EMBL" id="X89689">
    <property type="protein sequence ID" value="CAA61836.1"/>
    <property type="molecule type" value="mRNA"/>
</dbReference>
<dbReference type="CCDS" id="CCDS22846.1"/>
<dbReference type="PIR" id="S58032">
    <property type="entry name" value="S58032"/>
</dbReference>
<dbReference type="RefSeq" id="NP_666817.1">
    <property type="nucleotide sequence ID" value="NM_146606.1"/>
</dbReference>
<dbReference type="SMR" id="Q8VFM9"/>
<dbReference type="FunCoup" id="Q8VFM9">
    <property type="interactions" value="1584"/>
</dbReference>
<dbReference type="STRING" id="10090.ENSMUSP00000149702"/>
<dbReference type="GlyCosmos" id="Q8VFM9">
    <property type="glycosylation" value="2 sites, No reported glycans"/>
</dbReference>
<dbReference type="GlyGen" id="Q8VFM9">
    <property type="glycosylation" value="3 sites"/>
</dbReference>
<dbReference type="PaxDb" id="10090-ENSMUSP00000064189"/>
<dbReference type="Antibodypedia" id="24990">
    <property type="antibodies" value="69 antibodies from 17 providers"/>
</dbReference>
<dbReference type="DNASU" id="18322"/>
<dbReference type="Ensembl" id="ENSMUST00000066997.4">
    <property type="protein sequence ID" value="ENSMUSP00000064189.3"/>
    <property type="gene ID" value="ENSMUSG00000054141.6"/>
</dbReference>
<dbReference type="Ensembl" id="ENSMUST00000216754.3">
    <property type="protein sequence ID" value="ENSMUSP00000149702.2"/>
    <property type="gene ID" value="ENSMUSG00000054141.6"/>
</dbReference>
<dbReference type="GeneID" id="18322"/>
<dbReference type="KEGG" id="mmu:18322"/>
<dbReference type="UCSC" id="uc009ogw.1">
    <property type="organism name" value="mouse"/>
</dbReference>
<dbReference type="AGR" id="MGI:109311"/>
<dbReference type="CTD" id="125963"/>
<dbReference type="MGI" id="MGI:109311">
    <property type="gene designation" value="Or1m1"/>
</dbReference>
<dbReference type="VEuPathDB" id="HostDB:ENSMUSG00000054141"/>
<dbReference type="eggNOG" id="ENOG502T9JZ">
    <property type="taxonomic scope" value="Eukaryota"/>
</dbReference>
<dbReference type="GeneTree" id="ENSGT00940000163044"/>
<dbReference type="HOGENOM" id="CLU_012526_1_3_1"/>
<dbReference type="InParanoid" id="Q8VFM9"/>
<dbReference type="OMA" id="IIMAIMK"/>
<dbReference type="OrthoDB" id="9975554at2759"/>
<dbReference type="PhylomeDB" id="Q8VFM9"/>
<dbReference type="TreeFam" id="TF337210"/>
<dbReference type="BioGRID-ORCS" id="18322">
    <property type="hits" value="1 hit in 71 CRISPR screens"/>
</dbReference>
<dbReference type="PRO" id="PR:Q8VFM9"/>
<dbReference type="Proteomes" id="UP000000589">
    <property type="component" value="Chromosome 9"/>
</dbReference>
<dbReference type="RNAct" id="Q8VFM9">
    <property type="molecule type" value="protein"/>
</dbReference>
<dbReference type="Bgee" id="ENSMUSG00000054141">
    <property type="expression patterns" value="Expressed in respiratory tract epithelium and 2 other cell types or tissues"/>
</dbReference>
<dbReference type="GO" id="GO:0016020">
    <property type="term" value="C:membrane"/>
    <property type="evidence" value="ECO:0000247"/>
    <property type="project" value="MGI"/>
</dbReference>
<dbReference type="GO" id="GO:0005886">
    <property type="term" value="C:plasma membrane"/>
    <property type="evidence" value="ECO:0007669"/>
    <property type="project" value="UniProtKB-SubCell"/>
</dbReference>
<dbReference type="GO" id="GO:0004930">
    <property type="term" value="F:G protein-coupled receptor activity"/>
    <property type="evidence" value="ECO:0007669"/>
    <property type="project" value="UniProtKB-KW"/>
</dbReference>
<dbReference type="GO" id="GO:0004984">
    <property type="term" value="F:olfactory receptor activity"/>
    <property type="evidence" value="ECO:0000247"/>
    <property type="project" value="MGI"/>
</dbReference>
<dbReference type="GO" id="GO:0007186">
    <property type="term" value="P:G protein-coupled receptor signaling pathway"/>
    <property type="evidence" value="ECO:0000247"/>
    <property type="project" value="MGI"/>
</dbReference>
<dbReference type="GO" id="GO:0007608">
    <property type="term" value="P:sensory perception of smell"/>
    <property type="evidence" value="ECO:0000247"/>
    <property type="project" value="MGI"/>
</dbReference>
<dbReference type="CDD" id="cd15918">
    <property type="entry name" value="7tmA_OR1_7-like"/>
    <property type="match status" value="1"/>
</dbReference>
<dbReference type="FunFam" id="1.20.1070.10:FF:000009">
    <property type="entry name" value="Olfactory receptor"/>
    <property type="match status" value="1"/>
</dbReference>
<dbReference type="Gene3D" id="1.20.1070.10">
    <property type="entry name" value="Rhodopsin 7-helix transmembrane proteins"/>
    <property type="match status" value="1"/>
</dbReference>
<dbReference type="InterPro" id="IPR000276">
    <property type="entry name" value="GPCR_Rhodpsn"/>
</dbReference>
<dbReference type="InterPro" id="IPR017452">
    <property type="entry name" value="GPCR_Rhodpsn_7TM"/>
</dbReference>
<dbReference type="InterPro" id="IPR000725">
    <property type="entry name" value="Olfact_rcpt"/>
</dbReference>
<dbReference type="PANTHER" id="PTHR48001">
    <property type="entry name" value="OLFACTORY RECEPTOR"/>
    <property type="match status" value="1"/>
</dbReference>
<dbReference type="Pfam" id="PF13853">
    <property type="entry name" value="7tm_4"/>
    <property type="match status" value="1"/>
</dbReference>
<dbReference type="PRINTS" id="PR00237">
    <property type="entry name" value="GPCRRHODOPSN"/>
</dbReference>
<dbReference type="PRINTS" id="PR00245">
    <property type="entry name" value="OLFACTORYR"/>
</dbReference>
<dbReference type="SUPFAM" id="SSF81321">
    <property type="entry name" value="Family A G protein-coupled receptor-like"/>
    <property type="match status" value="1"/>
</dbReference>
<dbReference type="PROSITE" id="PS00237">
    <property type="entry name" value="G_PROTEIN_RECEP_F1_1"/>
    <property type="match status" value="1"/>
</dbReference>
<dbReference type="PROSITE" id="PS50262">
    <property type="entry name" value="G_PROTEIN_RECEP_F1_2"/>
    <property type="match status" value="1"/>
</dbReference>
<accession>Q8VFM9</accession>
<accession>Q62340</accession>
<feature type="chain" id="PRO_0000352790" description="Olfactory receptor 1M1">
    <location>
        <begin position="1"/>
        <end position="313"/>
    </location>
</feature>
<feature type="topological domain" description="Extracellular" evidence="1">
    <location>
        <begin position="1"/>
        <end position="25"/>
    </location>
</feature>
<feature type="transmembrane region" description="Helical; Name=1" evidence="1">
    <location>
        <begin position="26"/>
        <end position="46"/>
    </location>
</feature>
<feature type="topological domain" description="Cytoplasmic" evidence="1">
    <location>
        <begin position="47"/>
        <end position="54"/>
    </location>
</feature>
<feature type="transmembrane region" description="Helical; Name=2" evidence="1">
    <location>
        <begin position="55"/>
        <end position="75"/>
    </location>
</feature>
<feature type="topological domain" description="Extracellular" evidence="1">
    <location>
        <begin position="76"/>
        <end position="97"/>
    </location>
</feature>
<feature type="transmembrane region" description="Helical; Name=3" evidence="1">
    <location>
        <begin position="98"/>
        <end position="118"/>
    </location>
</feature>
<feature type="topological domain" description="Cytoplasmic" evidence="1">
    <location>
        <begin position="119"/>
        <end position="142"/>
    </location>
</feature>
<feature type="transmembrane region" description="Helical; Name=4" evidence="1">
    <location>
        <begin position="143"/>
        <end position="163"/>
    </location>
</feature>
<feature type="topological domain" description="Extracellular" evidence="1">
    <location>
        <begin position="164"/>
        <end position="196"/>
    </location>
</feature>
<feature type="transmembrane region" description="Helical; Name=5" evidence="1">
    <location>
        <begin position="197"/>
        <end position="217"/>
    </location>
</feature>
<feature type="topological domain" description="Cytoplasmic" evidence="1">
    <location>
        <begin position="218"/>
        <end position="244"/>
    </location>
</feature>
<feature type="transmembrane region" description="Helical; Name=6" evidence="1">
    <location>
        <begin position="245"/>
        <end position="265"/>
    </location>
</feature>
<feature type="topological domain" description="Extracellular" evidence="1">
    <location>
        <begin position="266"/>
        <end position="274"/>
    </location>
</feature>
<feature type="transmembrane region" description="Helical; Name=7" evidence="1">
    <location>
        <begin position="275"/>
        <end position="292"/>
    </location>
</feature>
<feature type="topological domain" description="Cytoplasmic" evidence="1">
    <location>
        <begin position="293"/>
        <end position="313"/>
    </location>
</feature>
<feature type="glycosylation site" description="N-linked (GlcNAc...) asparagine" evidence="1">
    <location>
        <position position="5"/>
    </location>
</feature>
<feature type="glycosylation site" description="N-linked (GlcNAc...) asparagine" evidence="1">
    <location>
        <position position="89"/>
    </location>
</feature>
<feature type="disulfide bond" evidence="2">
    <location>
        <begin position="97"/>
        <end position="179"/>
    </location>
</feature>
<proteinExistence type="evidence at transcript level"/>
<gene>
    <name evidence="5" type="primary">Or1m1</name>
    <name evidence="5" type="synonym">Mor132-1</name>
    <name evidence="5" type="synonym">Olfr24</name>
</gene>
<protein>
    <recommendedName>
        <fullName evidence="4">Olfactory receptor 1M1</fullName>
    </recommendedName>
    <alternativeName>
        <fullName>Olfactory receptor 132-1</fullName>
    </alternativeName>
    <alternativeName>
        <fullName>Olfactory receptor 24</fullName>
    </alternativeName>
    <alternativeName>
        <fullName>Olfactory receptor TPCR51</fullName>
    </alternativeName>
</protein>
<comment type="function">
    <text evidence="4">Odorant receptor.</text>
</comment>
<comment type="subcellular location">
    <subcellularLocation>
        <location evidence="4">Cell membrane</location>
        <topology evidence="1">Multi-pass membrane protein</topology>
    </subcellularLocation>
</comment>
<comment type="tissue specificity">
    <text evidence="3">Expressed in testis.</text>
</comment>
<comment type="similarity">
    <text evidence="2">Belongs to the G-protein coupled receptor 1 family.</text>
</comment>
<sequence>MEPQNHTSASEFILLGLSEKPDHDPVLFSLFLCMYMITVVGNLLIILAISFDSHLHTPMYFFLANLSLVDFCLATNTVPKMLVNIQTRNKSISYPCCLTQMYFFHFFGIMDSVLIAVMAYDRFVAICHPLHYSTIMSPRLCGLLVGVPWVYSCFISLTHILLMARLVFCGKNELPHYFCDLTPLLRLSCTDTTVNKIFVLIVAGMVIATPFVCILASYARIIVAIMKVPSAGGRKKAFSTCSSHLSVVALFYGTTIGVYLCPSSVRTAVKEKASAVMYTAVTPMLNPFIYSLRNRDLKGALKKIINRKISTSS</sequence>
<evidence type="ECO:0000255" key="1"/>
<evidence type="ECO:0000255" key="2">
    <source>
        <dbReference type="PROSITE-ProRule" id="PRU00521"/>
    </source>
</evidence>
<evidence type="ECO:0000269" key="3">
    <source>
    </source>
</evidence>
<evidence type="ECO:0000305" key="4"/>
<evidence type="ECO:0000312" key="5">
    <source>
        <dbReference type="MGI" id="MGI:109311"/>
    </source>
</evidence>
<keyword id="KW-1003">Cell membrane</keyword>
<keyword id="KW-1015">Disulfide bond</keyword>
<keyword id="KW-0297">G-protein coupled receptor</keyword>
<keyword id="KW-0325">Glycoprotein</keyword>
<keyword id="KW-0472">Membrane</keyword>
<keyword id="KW-0552">Olfaction</keyword>
<keyword id="KW-0675">Receptor</keyword>
<keyword id="KW-1185">Reference proteome</keyword>
<keyword id="KW-0716">Sensory transduction</keyword>
<keyword id="KW-0807">Transducer</keyword>
<keyword id="KW-0812">Transmembrane</keyword>
<keyword id="KW-1133">Transmembrane helix</keyword>